<reference key="1">
    <citation type="journal article" date="2006" name="Nat. Biotechnol.">
        <title>Genome sequence of the ubiquitous hydrocarbon-degrading marine bacterium Alcanivorax borkumensis.</title>
        <authorList>
            <person name="Schneiker S."/>
            <person name="Martins dos Santos V.A.P."/>
            <person name="Bartels D."/>
            <person name="Bekel T."/>
            <person name="Brecht M."/>
            <person name="Buhrmester J."/>
            <person name="Chernikova T.N."/>
            <person name="Denaro R."/>
            <person name="Ferrer M."/>
            <person name="Gertler C."/>
            <person name="Goesmann A."/>
            <person name="Golyshina O.V."/>
            <person name="Kaminski F."/>
            <person name="Khachane A.N."/>
            <person name="Lang S."/>
            <person name="Linke B."/>
            <person name="McHardy A.C."/>
            <person name="Meyer F."/>
            <person name="Nechitaylo T."/>
            <person name="Puehler A."/>
            <person name="Regenhardt D."/>
            <person name="Rupp O."/>
            <person name="Sabirova J.S."/>
            <person name="Selbitschka W."/>
            <person name="Yakimov M.M."/>
            <person name="Timmis K.N."/>
            <person name="Vorhoelter F.-J."/>
            <person name="Weidner S."/>
            <person name="Kaiser O."/>
            <person name="Golyshin P.N."/>
        </authorList>
    </citation>
    <scope>NUCLEOTIDE SEQUENCE [LARGE SCALE GENOMIC DNA]</scope>
    <source>
        <strain>ATCC 700651 / DSM 11573 / NCIMB 13689 / SK2</strain>
    </source>
</reference>
<sequence>MTAQILDGKTLAQQFEQEMRLRVDVLKAKANGHTPILATILVGADPASATYVKMKGNACQRVGMESVAIELSEETTTAQLLAKIDELNNNQDVHGILLQHPVPAQIDERACFDAISLEKDVDGVTCLGFGRMSMGEAAYGCATPKGIMRLLEHYQVELEGKHAVVVGRSAILGKPMAMMMLEANATVTICHSRTQNLPELVKQADIVVGAVGKPEFIKADWIKDGAVVVDAGFHPERCGDIELAPLVDRVAAYTPVPGGVGPMTINTLIFQTLQSGEKAFG</sequence>
<comment type="function">
    <text evidence="1">Catalyzes the oxidation of 5,10-methylenetetrahydrofolate to 5,10-methenyltetrahydrofolate and then the hydrolysis of 5,10-methenyltetrahydrofolate to 10-formyltetrahydrofolate.</text>
</comment>
<comment type="catalytic activity">
    <reaction evidence="1">
        <text>(6R)-5,10-methylene-5,6,7,8-tetrahydrofolate + NADP(+) = (6R)-5,10-methenyltetrahydrofolate + NADPH</text>
        <dbReference type="Rhea" id="RHEA:22812"/>
        <dbReference type="ChEBI" id="CHEBI:15636"/>
        <dbReference type="ChEBI" id="CHEBI:57455"/>
        <dbReference type="ChEBI" id="CHEBI:57783"/>
        <dbReference type="ChEBI" id="CHEBI:58349"/>
        <dbReference type="EC" id="1.5.1.5"/>
    </reaction>
</comment>
<comment type="catalytic activity">
    <reaction evidence="1">
        <text>(6R)-5,10-methenyltetrahydrofolate + H2O = (6R)-10-formyltetrahydrofolate + H(+)</text>
        <dbReference type="Rhea" id="RHEA:23700"/>
        <dbReference type="ChEBI" id="CHEBI:15377"/>
        <dbReference type="ChEBI" id="CHEBI:15378"/>
        <dbReference type="ChEBI" id="CHEBI:57455"/>
        <dbReference type="ChEBI" id="CHEBI:195366"/>
        <dbReference type="EC" id="3.5.4.9"/>
    </reaction>
</comment>
<comment type="pathway">
    <text evidence="1">One-carbon metabolism; tetrahydrofolate interconversion.</text>
</comment>
<comment type="subunit">
    <text evidence="1">Homodimer.</text>
</comment>
<comment type="similarity">
    <text evidence="1">Belongs to the tetrahydrofolate dehydrogenase/cyclohydrolase family.</text>
</comment>
<comment type="sequence caution" evidence="2">
    <conflict type="erroneous initiation">
        <sequence resource="EMBL-CDS" id="CAL16656"/>
    </conflict>
</comment>
<accession>Q0VQ92</accession>
<feature type="chain" id="PRO_0000268255" description="Bifunctional protein FolD">
    <location>
        <begin position="1"/>
        <end position="281"/>
    </location>
</feature>
<feature type="binding site" evidence="1">
    <location>
        <begin position="167"/>
        <end position="169"/>
    </location>
    <ligand>
        <name>NADP(+)</name>
        <dbReference type="ChEBI" id="CHEBI:58349"/>
    </ligand>
</feature>
<feature type="binding site" evidence="1">
    <location>
        <position position="192"/>
    </location>
    <ligand>
        <name>NADP(+)</name>
        <dbReference type="ChEBI" id="CHEBI:58349"/>
    </ligand>
</feature>
<dbReference type="EC" id="1.5.1.5" evidence="1"/>
<dbReference type="EC" id="3.5.4.9" evidence="1"/>
<dbReference type="EMBL" id="AM286690">
    <property type="protein sequence ID" value="CAL16656.1"/>
    <property type="status" value="ALT_INIT"/>
    <property type="molecule type" value="Genomic_DNA"/>
</dbReference>
<dbReference type="RefSeq" id="WP_041704932.1">
    <property type="nucleotide sequence ID" value="NC_008260.1"/>
</dbReference>
<dbReference type="SMR" id="Q0VQ92"/>
<dbReference type="STRING" id="393595.ABO_1208"/>
<dbReference type="KEGG" id="abo:ABO_1208"/>
<dbReference type="eggNOG" id="COG0190">
    <property type="taxonomic scope" value="Bacteria"/>
</dbReference>
<dbReference type="HOGENOM" id="CLU_034045_2_1_6"/>
<dbReference type="OrthoDB" id="9803580at2"/>
<dbReference type="UniPathway" id="UPA00193"/>
<dbReference type="Proteomes" id="UP000008871">
    <property type="component" value="Chromosome"/>
</dbReference>
<dbReference type="GO" id="GO:0005829">
    <property type="term" value="C:cytosol"/>
    <property type="evidence" value="ECO:0007669"/>
    <property type="project" value="TreeGrafter"/>
</dbReference>
<dbReference type="GO" id="GO:0004477">
    <property type="term" value="F:methenyltetrahydrofolate cyclohydrolase activity"/>
    <property type="evidence" value="ECO:0007669"/>
    <property type="project" value="UniProtKB-UniRule"/>
</dbReference>
<dbReference type="GO" id="GO:0004488">
    <property type="term" value="F:methylenetetrahydrofolate dehydrogenase (NADP+) activity"/>
    <property type="evidence" value="ECO:0007669"/>
    <property type="project" value="UniProtKB-UniRule"/>
</dbReference>
<dbReference type="GO" id="GO:0000105">
    <property type="term" value="P:L-histidine biosynthetic process"/>
    <property type="evidence" value="ECO:0007669"/>
    <property type="project" value="UniProtKB-KW"/>
</dbReference>
<dbReference type="GO" id="GO:0009086">
    <property type="term" value="P:methionine biosynthetic process"/>
    <property type="evidence" value="ECO:0007669"/>
    <property type="project" value="UniProtKB-KW"/>
</dbReference>
<dbReference type="GO" id="GO:0006164">
    <property type="term" value="P:purine nucleotide biosynthetic process"/>
    <property type="evidence" value="ECO:0007669"/>
    <property type="project" value="UniProtKB-KW"/>
</dbReference>
<dbReference type="GO" id="GO:0035999">
    <property type="term" value="P:tetrahydrofolate interconversion"/>
    <property type="evidence" value="ECO:0007669"/>
    <property type="project" value="UniProtKB-UniRule"/>
</dbReference>
<dbReference type="CDD" id="cd01080">
    <property type="entry name" value="NAD_bind_m-THF_DH_Cyclohyd"/>
    <property type="match status" value="1"/>
</dbReference>
<dbReference type="FunFam" id="3.40.50.720:FF:000094">
    <property type="entry name" value="Bifunctional protein FolD"/>
    <property type="match status" value="1"/>
</dbReference>
<dbReference type="FunFam" id="3.40.50.10860:FF:000005">
    <property type="entry name" value="C-1-tetrahydrofolate synthase, cytoplasmic, putative"/>
    <property type="match status" value="1"/>
</dbReference>
<dbReference type="Gene3D" id="3.40.50.10860">
    <property type="entry name" value="Leucine Dehydrogenase, chain A, domain 1"/>
    <property type="match status" value="1"/>
</dbReference>
<dbReference type="Gene3D" id="3.40.50.720">
    <property type="entry name" value="NAD(P)-binding Rossmann-like Domain"/>
    <property type="match status" value="1"/>
</dbReference>
<dbReference type="HAMAP" id="MF_01576">
    <property type="entry name" value="THF_DHG_CYH"/>
    <property type="match status" value="1"/>
</dbReference>
<dbReference type="InterPro" id="IPR046346">
    <property type="entry name" value="Aminoacid_DH-like_N_sf"/>
</dbReference>
<dbReference type="InterPro" id="IPR036291">
    <property type="entry name" value="NAD(P)-bd_dom_sf"/>
</dbReference>
<dbReference type="InterPro" id="IPR000672">
    <property type="entry name" value="THF_DH/CycHdrlase"/>
</dbReference>
<dbReference type="InterPro" id="IPR020630">
    <property type="entry name" value="THF_DH/CycHdrlase_cat_dom"/>
</dbReference>
<dbReference type="InterPro" id="IPR020867">
    <property type="entry name" value="THF_DH/CycHdrlase_CS"/>
</dbReference>
<dbReference type="InterPro" id="IPR020631">
    <property type="entry name" value="THF_DH/CycHdrlase_NAD-bd_dom"/>
</dbReference>
<dbReference type="NCBIfam" id="NF010788">
    <property type="entry name" value="PRK14192.1"/>
    <property type="match status" value="1"/>
</dbReference>
<dbReference type="PANTHER" id="PTHR48099:SF5">
    <property type="entry name" value="C-1-TETRAHYDROFOLATE SYNTHASE, CYTOPLASMIC"/>
    <property type="match status" value="1"/>
</dbReference>
<dbReference type="PANTHER" id="PTHR48099">
    <property type="entry name" value="C-1-TETRAHYDROFOLATE SYNTHASE, CYTOPLASMIC-RELATED"/>
    <property type="match status" value="1"/>
</dbReference>
<dbReference type="Pfam" id="PF00763">
    <property type="entry name" value="THF_DHG_CYH"/>
    <property type="match status" value="1"/>
</dbReference>
<dbReference type="Pfam" id="PF02882">
    <property type="entry name" value="THF_DHG_CYH_C"/>
    <property type="match status" value="1"/>
</dbReference>
<dbReference type="PRINTS" id="PR00085">
    <property type="entry name" value="THFDHDRGNASE"/>
</dbReference>
<dbReference type="SUPFAM" id="SSF53223">
    <property type="entry name" value="Aminoacid dehydrogenase-like, N-terminal domain"/>
    <property type="match status" value="1"/>
</dbReference>
<dbReference type="SUPFAM" id="SSF51735">
    <property type="entry name" value="NAD(P)-binding Rossmann-fold domains"/>
    <property type="match status" value="1"/>
</dbReference>
<dbReference type="PROSITE" id="PS00767">
    <property type="entry name" value="THF_DHG_CYH_2"/>
    <property type="match status" value="1"/>
</dbReference>
<proteinExistence type="inferred from homology"/>
<name>FOLD_ALCBS</name>
<gene>
    <name evidence="1" type="primary">folD</name>
    <name type="ordered locus">ABO_1208</name>
</gene>
<organism>
    <name type="scientific">Alcanivorax borkumensis (strain ATCC 700651 / DSM 11573 / NCIMB 13689 / SK2)</name>
    <dbReference type="NCBI Taxonomy" id="393595"/>
    <lineage>
        <taxon>Bacteria</taxon>
        <taxon>Pseudomonadati</taxon>
        <taxon>Pseudomonadota</taxon>
        <taxon>Gammaproteobacteria</taxon>
        <taxon>Oceanospirillales</taxon>
        <taxon>Alcanivoracaceae</taxon>
        <taxon>Alcanivorax</taxon>
    </lineage>
</organism>
<protein>
    <recommendedName>
        <fullName evidence="1">Bifunctional protein FolD</fullName>
    </recommendedName>
    <domain>
        <recommendedName>
            <fullName evidence="1">Methylenetetrahydrofolate dehydrogenase</fullName>
            <ecNumber evidence="1">1.5.1.5</ecNumber>
        </recommendedName>
    </domain>
    <domain>
        <recommendedName>
            <fullName evidence="1">Methenyltetrahydrofolate cyclohydrolase</fullName>
            <ecNumber evidence="1">3.5.4.9</ecNumber>
        </recommendedName>
    </domain>
</protein>
<keyword id="KW-0028">Amino-acid biosynthesis</keyword>
<keyword id="KW-0368">Histidine biosynthesis</keyword>
<keyword id="KW-0378">Hydrolase</keyword>
<keyword id="KW-0486">Methionine biosynthesis</keyword>
<keyword id="KW-0511">Multifunctional enzyme</keyword>
<keyword id="KW-0521">NADP</keyword>
<keyword id="KW-0554">One-carbon metabolism</keyword>
<keyword id="KW-0560">Oxidoreductase</keyword>
<keyword id="KW-0658">Purine biosynthesis</keyword>
<keyword id="KW-1185">Reference proteome</keyword>
<evidence type="ECO:0000255" key="1">
    <source>
        <dbReference type="HAMAP-Rule" id="MF_01576"/>
    </source>
</evidence>
<evidence type="ECO:0000305" key="2"/>